<feature type="chain" id="PRO_0000069999" description="Oxytocin receptor">
    <location>
        <begin position="1"/>
        <end position="389"/>
    </location>
</feature>
<feature type="topological domain" description="Extracellular" evidence="2">
    <location>
        <begin position="1"/>
        <end position="38"/>
    </location>
</feature>
<feature type="transmembrane region" description="Helical; Name=1" evidence="2">
    <location>
        <begin position="39"/>
        <end position="63"/>
    </location>
</feature>
<feature type="topological domain" description="Cytoplasmic" evidence="2">
    <location>
        <begin position="64"/>
        <end position="74"/>
    </location>
</feature>
<feature type="transmembrane region" description="Helical; Name=2" evidence="2">
    <location>
        <begin position="75"/>
        <end position="97"/>
    </location>
</feature>
<feature type="topological domain" description="Extracellular" evidence="2">
    <location>
        <begin position="98"/>
        <end position="113"/>
    </location>
</feature>
<feature type="transmembrane region" description="Helical; Name=3" evidence="2">
    <location>
        <begin position="114"/>
        <end position="135"/>
    </location>
</feature>
<feature type="topological domain" description="Cytoplasmic" evidence="2">
    <location>
        <begin position="136"/>
        <end position="154"/>
    </location>
</feature>
<feature type="transmembrane region" description="Helical; Name=4" evidence="2">
    <location>
        <begin position="155"/>
        <end position="175"/>
    </location>
</feature>
<feature type="topological domain" description="Extracellular" evidence="2">
    <location>
        <begin position="176"/>
        <end position="202"/>
    </location>
</feature>
<feature type="transmembrane region" description="Helical; Name=5" evidence="2">
    <location>
        <begin position="203"/>
        <end position="225"/>
    </location>
</feature>
<feature type="topological domain" description="Cytoplasmic" evidence="2">
    <location>
        <begin position="226"/>
        <end position="275"/>
    </location>
</feature>
<feature type="transmembrane region" description="Helical; Name=6" evidence="2">
    <location>
        <begin position="276"/>
        <end position="294"/>
    </location>
</feature>
<feature type="topological domain" description="Extracellular" evidence="2">
    <location>
        <begin position="295"/>
        <end position="309"/>
    </location>
</feature>
<feature type="transmembrane region" description="Helical; Name=7" evidence="2">
    <location>
        <begin position="310"/>
        <end position="332"/>
    </location>
</feature>
<feature type="topological domain" description="Cytoplasmic" evidence="2">
    <location>
        <begin position="333"/>
        <end position="389"/>
    </location>
</feature>
<feature type="region of interest" description="Disordered" evidence="4">
    <location>
        <begin position="1"/>
        <end position="27"/>
    </location>
</feature>
<feature type="region of interest" description="Disordered" evidence="4">
    <location>
        <begin position="358"/>
        <end position="389"/>
    </location>
</feature>
<feature type="compositionally biased region" description="Polar residues" evidence="4">
    <location>
        <begin position="8"/>
        <end position="18"/>
    </location>
</feature>
<feature type="compositionally biased region" description="Low complexity" evidence="4">
    <location>
        <begin position="360"/>
        <end position="389"/>
    </location>
</feature>
<feature type="modified residue" description="Phosphoserine" evidence="1">
    <location>
        <position position="366"/>
    </location>
</feature>
<feature type="modified residue" description="Phosphoserine" evidence="1">
    <location>
        <position position="368"/>
    </location>
</feature>
<feature type="glycosylation site" description="N-linked (GlcNAc...) asparagine" evidence="2">
    <location>
        <position position="8"/>
    </location>
</feature>
<feature type="glycosylation site" description="N-linked (GlcNAc...) asparagine" evidence="2">
    <location>
        <position position="15"/>
    </location>
</feature>
<feature type="glycosylation site" description="N-linked (GlcNAc...) asparagine" evidence="2">
    <location>
        <position position="26"/>
    </location>
</feature>
<feature type="disulfide bond" evidence="3">
    <location>
        <begin position="112"/>
        <end position="187"/>
    </location>
</feature>
<sequence length="389" mass="42914">MEGELAANWSTEAVNSSAAPPGAEGNCTAGPPRRNEALARVEVAVLCLILFLALSGNACVLLALRTTRHKHSRLFFFMKHLSIADLVVAVFQVLPQLLWDITFRFYGPDLLCRLVKYLQVVGMFASTYLLLLMSLDRCLAICQPLRSLRRRTDRLAVLATWLGCLVASAPQVHIFSLREVADGVFDCWAVFIQPWGPKAYITWITLAVYIVPVIVLAACYGLISFKIWQNLRLKTAAAAAAEAPEGAAAGDGGRMALARVSSVKLISKAKIRTVKMTFIIVLAFIVCWTPFFFVQMWSVWDANAPKEASAFIIVMLLASLNSCCNPWIYMLFTGHLFHELVQRFLCCSASYLKGNRLGETSTSKKSNSSSFVLSHRSSSQRSCSQPSTA</sequence>
<reference key="1">
    <citation type="journal article" date="1998" name="J. Recept. Signal Transduct.">
        <title>Cloning and expression of the rhesus monkey oxytocin receptor.</title>
        <authorList>
            <person name="Salvatore C.A."/>
            <person name="Woyden C.J."/>
            <person name="Guidotti M.T."/>
            <person name="Pettibone D.J."/>
            <person name="Jacobson M.A."/>
        </authorList>
    </citation>
    <scope>NUCLEOTIDE SEQUENCE [MRNA]</scope>
</reference>
<dbReference type="EMBL" id="U82440">
    <property type="protein sequence ID" value="AAC52031.1"/>
    <property type="molecule type" value="mRNA"/>
</dbReference>
<dbReference type="RefSeq" id="NP_001038197.1">
    <property type="nucleotide sequence ID" value="NM_001044732.1"/>
</dbReference>
<dbReference type="RefSeq" id="XP_028699019.1">
    <property type="nucleotide sequence ID" value="XM_028843186.1"/>
</dbReference>
<dbReference type="SMR" id="P56494"/>
<dbReference type="FunCoup" id="P56494">
    <property type="interactions" value="1217"/>
</dbReference>
<dbReference type="STRING" id="9544.ENSMMUP00000064448"/>
<dbReference type="BindingDB" id="P56494"/>
<dbReference type="GlyCosmos" id="P56494">
    <property type="glycosylation" value="3 sites, No reported glycans"/>
</dbReference>
<dbReference type="PaxDb" id="9544-ENSMMUP00000012694"/>
<dbReference type="Ensembl" id="ENSMMUT00000013548.3">
    <property type="protein sequence ID" value="ENSMMUP00000012694.1"/>
    <property type="gene ID" value="ENSMMUG00000009703.3"/>
</dbReference>
<dbReference type="Ensembl" id="ENSMMUT00000083266.1">
    <property type="protein sequence ID" value="ENSMMUP00000064448.1"/>
    <property type="gene ID" value="ENSMMUG00000009703.3"/>
</dbReference>
<dbReference type="GeneID" id="702048"/>
<dbReference type="KEGG" id="mcc:702048"/>
<dbReference type="CTD" id="5021"/>
<dbReference type="VEuPathDB" id="HostDB:ENSMMUG00000009703"/>
<dbReference type="VGNC" id="VGNC:75731">
    <property type="gene designation" value="OXTR"/>
</dbReference>
<dbReference type="eggNOG" id="KOG3656">
    <property type="taxonomic scope" value="Eukaryota"/>
</dbReference>
<dbReference type="GeneTree" id="ENSGT01050000244882"/>
<dbReference type="HOGENOM" id="CLU_009579_15_3_1"/>
<dbReference type="InParanoid" id="P56494"/>
<dbReference type="OMA" id="RCFFCCC"/>
<dbReference type="OrthoDB" id="6435638at2759"/>
<dbReference type="TreeFam" id="TF106499"/>
<dbReference type="Proteomes" id="UP000006718">
    <property type="component" value="Chromosome 2"/>
</dbReference>
<dbReference type="Bgee" id="ENSMMUG00000009703">
    <property type="expression patterns" value="Expressed in fibroblast and 3 other cell types or tissues"/>
</dbReference>
<dbReference type="GO" id="GO:0005886">
    <property type="term" value="C:plasma membrane"/>
    <property type="evidence" value="ECO:0000318"/>
    <property type="project" value="GO_Central"/>
</dbReference>
<dbReference type="GO" id="GO:0004990">
    <property type="term" value="F:oxytocin receptor activity"/>
    <property type="evidence" value="ECO:0000318"/>
    <property type="project" value="GO_Central"/>
</dbReference>
<dbReference type="GO" id="GO:0005000">
    <property type="term" value="F:vasopressin receptor activity"/>
    <property type="evidence" value="ECO:0000318"/>
    <property type="project" value="GO_Central"/>
</dbReference>
<dbReference type="GO" id="GO:0032870">
    <property type="term" value="P:cellular response to hormone stimulus"/>
    <property type="evidence" value="ECO:0000318"/>
    <property type="project" value="GO_Central"/>
</dbReference>
<dbReference type="GO" id="GO:0007565">
    <property type="term" value="P:female pregnancy"/>
    <property type="evidence" value="ECO:0000318"/>
    <property type="project" value="GO_Central"/>
</dbReference>
<dbReference type="GO" id="GO:0007186">
    <property type="term" value="P:G protein-coupled receptor signaling pathway"/>
    <property type="evidence" value="ECO:0000318"/>
    <property type="project" value="GO_Central"/>
</dbReference>
<dbReference type="GO" id="GO:0060137">
    <property type="term" value="P:maternal process involved in parturition"/>
    <property type="evidence" value="ECO:0000318"/>
    <property type="project" value="GO_Central"/>
</dbReference>
<dbReference type="GO" id="GO:0045777">
    <property type="term" value="P:positive regulation of blood pressure"/>
    <property type="evidence" value="ECO:0007669"/>
    <property type="project" value="Ensembl"/>
</dbReference>
<dbReference type="GO" id="GO:0120162">
    <property type="term" value="P:positive regulation of cold-induced thermogenesis"/>
    <property type="evidence" value="ECO:0007669"/>
    <property type="project" value="Ensembl"/>
</dbReference>
<dbReference type="GO" id="GO:0045907">
    <property type="term" value="P:positive regulation of vasoconstriction"/>
    <property type="evidence" value="ECO:0000318"/>
    <property type="project" value="GO_Central"/>
</dbReference>
<dbReference type="GO" id="GO:0001992">
    <property type="term" value="P:regulation of systemic arterial blood pressure by vasopressin"/>
    <property type="evidence" value="ECO:0000318"/>
    <property type="project" value="GO_Central"/>
</dbReference>
<dbReference type="CDD" id="cd15387">
    <property type="entry name" value="7tmA_OT_R"/>
    <property type="match status" value="1"/>
</dbReference>
<dbReference type="FunFam" id="1.20.1070.10:FF:000145">
    <property type="entry name" value="Oxytocin receptor"/>
    <property type="match status" value="1"/>
</dbReference>
<dbReference type="Gene3D" id="1.20.1070.10">
    <property type="entry name" value="Rhodopsin 7-helix transmembrane proteins"/>
    <property type="match status" value="1"/>
</dbReference>
<dbReference type="InterPro" id="IPR000276">
    <property type="entry name" value="GPCR_Rhodpsn"/>
</dbReference>
<dbReference type="InterPro" id="IPR017452">
    <property type="entry name" value="GPCR_Rhodpsn_7TM"/>
</dbReference>
<dbReference type="InterPro" id="IPR002062">
    <property type="entry name" value="Oxytocn_rcpt"/>
</dbReference>
<dbReference type="InterPro" id="IPR001817">
    <property type="entry name" value="Vasoprsn_rcpt"/>
</dbReference>
<dbReference type="PANTHER" id="PTHR24241">
    <property type="entry name" value="NEUROPEPTIDE RECEPTOR-RELATED G-PROTEIN COUPLED RECEPTOR"/>
    <property type="match status" value="1"/>
</dbReference>
<dbReference type="PANTHER" id="PTHR24241:SF89">
    <property type="entry name" value="OXYTOCIN RECEPTOR"/>
    <property type="match status" value="1"/>
</dbReference>
<dbReference type="Pfam" id="PF00001">
    <property type="entry name" value="7tm_1"/>
    <property type="match status" value="1"/>
</dbReference>
<dbReference type="PRINTS" id="PR00237">
    <property type="entry name" value="GPCRRHODOPSN"/>
</dbReference>
<dbReference type="PRINTS" id="PR00665">
    <property type="entry name" value="OXYTOCINR"/>
</dbReference>
<dbReference type="PRINTS" id="PR00896">
    <property type="entry name" value="VASOPRESSINR"/>
</dbReference>
<dbReference type="SUPFAM" id="SSF81321">
    <property type="entry name" value="Family A G protein-coupled receptor-like"/>
    <property type="match status" value="1"/>
</dbReference>
<dbReference type="PROSITE" id="PS00237">
    <property type="entry name" value="G_PROTEIN_RECEP_F1_1"/>
    <property type="match status" value="1"/>
</dbReference>
<dbReference type="PROSITE" id="PS50262">
    <property type="entry name" value="G_PROTEIN_RECEP_F1_2"/>
    <property type="match status" value="1"/>
</dbReference>
<name>OXYR_MACMU</name>
<comment type="function">
    <text>Receptor for oxytocin. The activity of this receptor is mediated by G proteins which activate a phosphatidylinositol-calcium second messenger system.</text>
</comment>
<comment type="subcellular location">
    <subcellularLocation>
        <location>Cell membrane</location>
        <topology>Multi-pass membrane protein</topology>
    </subcellularLocation>
</comment>
<comment type="similarity">
    <text evidence="3">Belongs to the G-protein coupled receptor 1 family. Vasopressin/oxytocin receptor subfamily.</text>
</comment>
<protein>
    <recommendedName>
        <fullName>Oxytocin receptor</fullName>
        <shortName>OT-R</shortName>
    </recommendedName>
</protein>
<organism>
    <name type="scientific">Macaca mulatta</name>
    <name type="common">Rhesus macaque</name>
    <dbReference type="NCBI Taxonomy" id="9544"/>
    <lineage>
        <taxon>Eukaryota</taxon>
        <taxon>Metazoa</taxon>
        <taxon>Chordata</taxon>
        <taxon>Craniata</taxon>
        <taxon>Vertebrata</taxon>
        <taxon>Euteleostomi</taxon>
        <taxon>Mammalia</taxon>
        <taxon>Eutheria</taxon>
        <taxon>Euarchontoglires</taxon>
        <taxon>Primates</taxon>
        <taxon>Haplorrhini</taxon>
        <taxon>Catarrhini</taxon>
        <taxon>Cercopithecidae</taxon>
        <taxon>Cercopithecinae</taxon>
        <taxon>Macaca</taxon>
    </lineage>
</organism>
<accession>P56494</accession>
<evidence type="ECO:0000250" key="1">
    <source>
        <dbReference type="UniProtKB" id="P70536"/>
    </source>
</evidence>
<evidence type="ECO:0000255" key="2"/>
<evidence type="ECO:0000255" key="3">
    <source>
        <dbReference type="PROSITE-ProRule" id="PRU00521"/>
    </source>
</evidence>
<evidence type="ECO:0000256" key="4">
    <source>
        <dbReference type="SAM" id="MobiDB-lite"/>
    </source>
</evidence>
<keyword id="KW-1003">Cell membrane</keyword>
<keyword id="KW-1015">Disulfide bond</keyword>
<keyword id="KW-0297">G-protein coupled receptor</keyword>
<keyword id="KW-0325">Glycoprotein</keyword>
<keyword id="KW-0472">Membrane</keyword>
<keyword id="KW-0597">Phosphoprotein</keyword>
<keyword id="KW-0675">Receptor</keyword>
<keyword id="KW-1185">Reference proteome</keyword>
<keyword id="KW-0807">Transducer</keyword>
<keyword id="KW-0812">Transmembrane</keyword>
<keyword id="KW-1133">Transmembrane helix</keyword>
<proteinExistence type="evidence at transcript level"/>
<gene>
    <name type="primary">OXTR</name>
</gene>